<sequence>MFAIIGPTASGKSDLAIKLALKLNYEILSLDSLSIYKEIDIASAKPSKEELSKVKHYGVNEIYPNEKFDVMKFIEIYKKIPHKNIIIVGGTGFYLKAMLEGISQMPEITDEIKKKAKQKDYAFFESVDPDFASKISPNDTYRIQKGLEIYFATKTPPSVYFKNNPPKPVLPDIPIFEIAVDRSVLRERIKKRTDKMFNSGLIDEVAYLEKKYRDRRLPALKAIGIKEVLDYFNGKYTLKTLKEKIITNTARLAKRQQTFNKTQFKKKISAPLEELEEIILSEIK</sequence>
<name>MIAA_NAUPA</name>
<dbReference type="EC" id="2.5.1.75" evidence="1"/>
<dbReference type="EMBL" id="CP001279">
    <property type="protein sequence ID" value="ACM92621.1"/>
    <property type="molecule type" value="Genomic_DNA"/>
</dbReference>
<dbReference type="RefSeq" id="WP_012663992.1">
    <property type="nucleotide sequence ID" value="NC_012115.1"/>
</dbReference>
<dbReference type="SMR" id="B9L615"/>
<dbReference type="STRING" id="598659.NAMH_1411"/>
<dbReference type="KEGG" id="nam:NAMH_1411"/>
<dbReference type="eggNOG" id="COG0324">
    <property type="taxonomic scope" value="Bacteria"/>
</dbReference>
<dbReference type="HOGENOM" id="CLU_032616_0_1_7"/>
<dbReference type="OrthoDB" id="9776390at2"/>
<dbReference type="Proteomes" id="UP000000448">
    <property type="component" value="Chromosome"/>
</dbReference>
<dbReference type="GO" id="GO:0005524">
    <property type="term" value="F:ATP binding"/>
    <property type="evidence" value="ECO:0007669"/>
    <property type="project" value="UniProtKB-UniRule"/>
</dbReference>
<dbReference type="GO" id="GO:0052381">
    <property type="term" value="F:tRNA dimethylallyltransferase activity"/>
    <property type="evidence" value="ECO:0007669"/>
    <property type="project" value="UniProtKB-UniRule"/>
</dbReference>
<dbReference type="GO" id="GO:0006400">
    <property type="term" value="P:tRNA modification"/>
    <property type="evidence" value="ECO:0007669"/>
    <property type="project" value="TreeGrafter"/>
</dbReference>
<dbReference type="Gene3D" id="1.10.20.140">
    <property type="match status" value="1"/>
</dbReference>
<dbReference type="Gene3D" id="3.40.50.300">
    <property type="entry name" value="P-loop containing nucleotide triphosphate hydrolases"/>
    <property type="match status" value="1"/>
</dbReference>
<dbReference type="HAMAP" id="MF_00185">
    <property type="entry name" value="IPP_trans"/>
    <property type="match status" value="1"/>
</dbReference>
<dbReference type="InterPro" id="IPR039657">
    <property type="entry name" value="Dimethylallyltransferase"/>
</dbReference>
<dbReference type="InterPro" id="IPR018022">
    <property type="entry name" value="IPT"/>
</dbReference>
<dbReference type="InterPro" id="IPR027417">
    <property type="entry name" value="P-loop_NTPase"/>
</dbReference>
<dbReference type="NCBIfam" id="TIGR00174">
    <property type="entry name" value="miaA"/>
    <property type="match status" value="1"/>
</dbReference>
<dbReference type="PANTHER" id="PTHR11088">
    <property type="entry name" value="TRNA DIMETHYLALLYLTRANSFERASE"/>
    <property type="match status" value="1"/>
</dbReference>
<dbReference type="PANTHER" id="PTHR11088:SF60">
    <property type="entry name" value="TRNA DIMETHYLALLYLTRANSFERASE"/>
    <property type="match status" value="1"/>
</dbReference>
<dbReference type="Pfam" id="PF01715">
    <property type="entry name" value="IPPT"/>
    <property type="match status" value="1"/>
</dbReference>
<dbReference type="SUPFAM" id="SSF52540">
    <property type="entry name" value="P-loop containing nucleoside triphosphate hydrolases"/>
    <property type="match status" value="2"/>
</dbReference>
<proteinExistence type="inferred from homology"/>
<gene>
    <name evidence="1" type="primary">miaA</name>
    <name type="ordered locus">NAMH_1411</name>
</gene>
<evidence type="ECO:0000255" key="1">
    <source>
        <dbReference type="HAMAP-Rule" id="MF_00185"/>
    </source>
</evidence>
<protein>
    <recommendedName>
        <fullName evidence="1">tRNA dimethylallyltransferase</fullName>
        <ecNumber evidence="1">2.5.1.75</ecNumber>
    </recommendedName>
    <alternativeName>
        <fullName evidence="1">Dimethylallyl diphosphate:tRNA dimethylallyltransferase</fullName>
        <shortName evidence="1">DMAPP:tRNA dimethylallyltransferase</shortName>
        <shortName evidence="1">DMATase</shortName>
    </alternativeName>
    <alternativeName>
        <fullName evidence="1">Isopentenyl-diphosphate:tRNA isopentenyltransferase</fullName>
        <shortName evidence="1">IPP transferase</shortName>
        <shortName evidence="1">IPPT</shortName>
        <shortName evidence="1">IPTase</shortName>
    </alternativeName>
</protein>
<keyword id="KW-0067">ATP-binding</keyword>
<keyword id="KW-0460">Magnesium</keyword>
<keyword id="KW-0547">Nucleotide-binding</keyword>
<keyword id="KW-0808">Transferase</keyword>
<keyword id="KW-0819">tRNA processing</keyword>
<comment type="function">
    <text evidence="1">Catalyzes the transfer of a dimethylallyl group onto the adenine at position 37 in tRNAs that read codons beginning with uridine, leading to the formation of N6-(dimethylallyl)adenosine (i(6)A).</text>
</comment>
<comment type="catalytic activity">
    <reaction evidence="1">
        <text>adenosine(37) in tRNA + dimethylallyl diphosphate = N(6)-dimethylallyladenosine(37) in tRNA + diphosphate</text>
        <dbReference type="Rhea" id="RHEA:26482"/>
        <dbReference type="Rhea" id="RHEA-COMP:10162"/>
        <dbReference type="Rhea" id="RHEA-COMP:10375"/>
        <dbReference type="ChEBI" id="CHEBI:33019"/>
        <dbReference type="ChEBI" id="CHEBI:57623"/>
        <dbReference type="ChEBI" id="CHEBI:74411"/>
        <dbReference type="ChEBI" id="CHEBI:74415"/>
        <dbReference type="EC" id="2.5.1.75"/>
    </reaction>
</comment>
<comment type="cofactor">
    <cofactor evidence="1">
        <name>Mg(2+)</name>
        <dbReference type="ChEBI" id="CHEBI:18420"/>
    </cofactor>
</comment>
<comment type="subunit">
    <text evidence="1">Monomer.</text>
</comment>
<comment type="similarity">
    <text evidence="1">Belongs to the IPP transferase family.</text>
</comment>
<reference key="1">
    <citation type="journal article" date="2009" name="PLoS Genet.">
        <title>Adaptations to submarine hydrothermal environments exemplified by the genome of Nautilia profundicola.</title>
        <authorList>
            <person name="Campbell B.J."/>
            <person name="Smith J.L."/>
            <person name="Hanson T.E."/>
            <person name="Klotz M.G."/>
            <person name="Stein L.Y."/>
            <person name="Lee C.K."/>
            <person name="Wu D."/>
            <person name="Robinson J.M."/>
            <person name="Khouri H.M."/>
            <person name="Eisen J.A."/>
            <person name="Cary S.C."/>
        </authorList>
    </citation>
    <scope>NUCLEOTIDE SEQUENCE [LARGE SCALE GENOMIC DNA]</scope>
    <source>
        <strain>ATCC BAA-1463 / DSM 18972 / AmH</strain>
    </source>
</reference>
<organism>
    <name type="scientific">Nautilia profundicola (strain ATCC BAA-1463 / DSM 18972 / AmH)</name>
    <dbReference type="NCBI Taxonomy" id="598659"/>
    <lineage>
        <taxon>Bacteria</taxon>
        <taxon>Pseudomonadati</taxon>
        <taxon>Campylobacterota</taxon>
        <taxon>Epsilonproteobacteria</taxon>
        <taxon>Nautiliales</taxon>
        <taxon>Nautiliaceae</taxon>
        <taxon>Nautilia</taxon>
    </lineage>
</organism>
<feature type="chain" id="PRO_0000377238" description="tRNA dimethylallyltransferase">
    <location>
        <begin position="1"/>
        <end position="284"/>
    </location>
</feature>
<feature type="region of interest" description="Interaction with substrate tRNA" evidence="1">
    <location>
        <begin position="31"/>
        <end position="34"/>
    </location>
</feature>
<feature type="binding site" evidence="1">
    <location>
        <begin position="6"/>
        <end position="13"/>
    </location>
    <ligand>
        <name>ATP</name>
        <dbReference type="ChEBI" id="CHEBI:30616"/>
    </ligand>
</feature>
<feature type="binding site" evidence="1">
    <location>
        <begin position="8"/>
        <end position="13"/>
    </location>
    <ligand>
        <name>substrate</name>
    </ligand>
</feature>
<feature type="site" description="Interaction with substrate tRNA" evidence="1">
    <location>
        <position position="91"/>
    </location>
</feature>
<accession>B9L615</accession>